<protein>
    <recommendedName>
        <fullName evidence="1">Thiosulfate sulfurtransferase GlpE</fullName>
        <ecNumber evidence="1">2.8.1.1</ecNumber>
    </recommendedName>
</protein>
<organism>
    <name type="scientific">Actinobacillus pleuropneumoniae serotype 5b (strain L20)</name>
    <dbReference type="NCBI Taxonomy" id="416269"/>
    <lineage>
        <taxon>Bacteria</taxon>
        <taxon>Pseudomonadati</taxon>
        <taxon>Pseudomonadota</taxon>
        <taxon>Gammaproteobacteria</taxon>
        <taxon>Pasteurellales</taxon>
        <taxon>Pasteurellaceae</taxon>
        <taxon>Actinobacillus</taxon>
    </lineage>
</organism>
<dbReference type="EC" id="2.8.1.1" evidence="1"/>
<dbReference type="EMBL" id="CP000569">
    <property type="protein sequence ID" value="ABN73187.1"/>
    <property type="molecule type" value="Genomic_DNA"/>
</dbReference>
<dbReference type="RefSeq" id="WP_005595720.1">
    <property type="nucleotide sequence ID" value="NC_009053.1"/>
</dbReference>
<dbReference type="SMR" id="A3MYF1"/>
<dbReference type="STRING" id="416269.APL_0079"/>
<dbReference type="EnsemblBacteria" id="ABN73187">
    <property type="protein sequence ID" value="ABN73187"/>
    <property type="gene ID" value="APL_0079"/>
</dbReference>
<dbReference type="GeneID" id="48598224"/>
<dbReference type="KEGG" id="apl:APL_0079"/>
<dbReference type="eggNOG" id="COG0607">
    <property type="taxonomic scope" value="Bacteria"/>
</dbReference>
<dbReference type="HOGENOM" id="CLU_089574_14_0_6"/>
<dbReference type="Proteomes" id="UP000001432">
    <property type="component" value="Chromosome"/>
</dbReference>
<dbReference type="GO" id="GO:0005737">
    <property type="term" value="C:cytoplasm"/>
    <property type="evidence" value="ECO:0007669"/>
    <property type="project" value="UniProtKB-SubCell"/>
</dbReference>
<dbReference type="GO" id="GO:0004792">
    <property type="term" value="F:thiosulfate-cyanide sulfurtransferase activity"/>
    <property type="evidence" value="ECO:0007669"/>
    <property type="project" value="UniProtKB-UniRule"/>
</dbReference>
<dbReference type="GO" id="GO:0006071">
    <property type="term" value="P:glycerol metabolic process"/>
    <property type="evidence" value="ECO:0007669"/>
    <property type="project" value="UniProtKB-UniRule"/>
</dbReference>
<dbReference type="CDD" id="cd01444">
    <property type="entry name" value="GlpE_ST"/>
    <property type="match status" value="1"/>
</dbReference>
<dbReference type="Gene3D" id="3.40.250.10">
    <property type="entry name" value="Rhodanese-like domain"/>
    <property type="match status" value="1"/>
</dbReference>
<dbReference type="HAMAP" id="MF_01009">
    <property type="entry name" value="Thiosulf_sulfurtr"/>
    <property type="match status" value="1"/>
</dbReference>
<dbReference type="InterPro" id="IPR050229">
    <property type="entry name" value="GlpE_sulfurtransferase"/>
</dbReference>
<dbReference type="InterPro" id="IPR001763">
    <property type="entry name" value="Rhodanese-like_dom"/>
</dbReference>
<dbReference type="InterPro" id="IPR036873">
    <property type="entry name" value="Rhodanese-like_dom_sf"/>
</dbReference>
<dbReference type="InterPro" id="IPR023695">
    <property type="entry name" value="Thiosulf_sulfurTrfase"/>
</dbReference>
<dbReference type="NCBIfam" id="NF001195">
    <property type="entry name" value="PRK00162.1"/>
    <property type="match status" value="1"/>
</dbReference>
<dbReference type="PANTHER" id="PTHR43031">
    <property type="entry name" value="FAD-DEPENDENT OXIDOREDUCTASE"/>
    <property type="match status" value="1"/>
</dbReference>
<dbReference type="PANTHER" id="PTHR43031:SF6">
    <property type="entry name" value="THIOSULFATE SULFURTRANSFERASE GLPE"/>
    <property type="match status" value="1"/>
</dbReference>
<dbReference type="Pfam" id="PF00581">
    <property type="entry name" value="Rhodanese"/>
    <property type="match status" value="1"/>
</dbReference>
<dbReference type="SMART" id="SM00450">
    <property type="entry name" value="RHOD"/>
    <property type="match status" value="1"/>
</dbReference>
<dbReference type="SUPFAM" id="SSF52821">
    <property type="entry name" value="Rhodanese/Cell cycle control phosphatase"/>
    <property type="match status" value="1"/>
</dbReference>
<dbReference type="PROSITE" id="PS50206">
    <property type="entry name" value="RHODANESE_3"/>
    <property type="match status" value="1"/>
</dbReference>
<sequence length="108" mass="12403">MSETFTEISPHQAWELIENEGATLADIRDGRRYAYSHPQDAFHLTNESYGRFLDEVDYEEPVIVMCYHGVSSRNTAQFLVEQGFDRVYSVKGGFDGWERSGLPIETAY</sequence>
<feature type="chain" id="PRO_1000062953" description="Thiosulfate sulfurtransferase GlpE">
    <location>
        <begin position="1"/>
        <end position="108"/>
    </location>
</feature>
<feature type="domain" description="Rhodanese" evidence="1">
    <location>
        <begin position="18"/>
        <end position="106"/>
    </location>
</feature>
<feature type="active site" description="Cysteine persulfide intermediate" evidence="1">
    <location>
        <position position="66"/>
    </location>
</feature>
<proteinExistence type="inferred from homology"/>
<keyword id="KW-0963">Cytoplasm</keyword>
<keyword id="KW-1185">Reference proteome</keyword>
<keyword id="KW-0808">Transferase</keyword>
<comment type="function">
    <text evidence="1">Transferase that catalyzes the transfer of sulfur from thiosulfate to thiophilic acceptors such as cyanide or dithiols. May function in a CysM-independent thiosulfate assimilation pathway by catalyzing the conversion of thiosulfate to sulfite, which can then be used for L-cysteine biosynthesis.</text>
</comment>
<comment type="catalytic activity">
    <reaction evidence="1">
        <text>thiosulfate + hydrogen cyanide = thiocyanate + sulfite + 2 H(+)</text>
        <dbReference type="Rhea" id="RHEA:16881"/>
        <dbReference type="ChEBI" id="CHEBI:15378"/>
        <dbReference type="ChEBI" id="CHEBI:17359"/>
        <dbReference type="ChEBI" id="CHEBI:18022"/>
        <dbReference type="ChEBI" id="CHEBI:18407"/>
        <dbReference type="ChEBI" id="CHEBI:33542"/>
        <dbReference type="EC" id="2.8.1.1"/>
    </reaction>
</comment>
<comment type="catalytic activity">
    <reaction evidence="1">
        <text>thiosulfate + [thioredoxin]-dithiol = [thioredoxin]-disulfide + hydrogen sulfide + sulfite + 2 H(+)</text>
        <dbReference type="Rhea" id="RHEA:83859"/>
        <dbReference type="Rhea" id="RHEA-COMP:10698"/>
        <dbReference type="Rhea" id="RHEA-COMP:10700"/>
        <dbReference type="ChEBI" id="CHEBI:15378"/>
        <dbReference type="ChEBI" id="CHEBI:17359"/>
        <dbReference type="ChEBI" id="CHEBI:29919"/>
        <dbReference type="ChEBI" id="CHEBI:29950"/>
        <dbReference type="ChEBI" id="CHEBI:33542"/>
        <dbReference type="ChEBI" id="CHEBI:50058"/>
    </reaction>
</comment>
<comment type="subcellular location">
    <subcellularLocation>
        <location evidence="1">Cytoplasm</location>
    </subcellularLocation>
</comment>
<comment type="similarity">
    <text evidence="1">Belongs to the GlpE family.</text>
</comment>
<accession>A3MYF1</accession>
<gene>
    <name evidence="1" type="primary">glpE</name>
    <name type="ordered locus">APL_0079</name>
</gene>
<name>GLPE_ACTP2</name>
<evidence type="ECO:0000255" key="1">
    <source>
        <dbReference type="HAMAP-Rule" id="MF_01009"/>
    </source>
</evidence>
<reference key="1">
    <citation type="journal article" date="2008" name="J. Bacteriol.">
        <title>The complete genome sequence of Actinobacillus pleuropneumoniae L20 (serotype 5b).</title>
        <authorList>
            <person name="Foote S.J."/>
            <person name="Bosse J.T."/>
            <person name="Bouevitch A.B."/>
            <person name="Langford P.R."/>
            <person name="Young N.M."/>
            <person name="Nash J.H.E."/>
        </authorList>
    </citation>
    <scope>NUCLEOTIDE SEQUENCE [LARGE SCALE GENOMIC DNA]</scope>
    <source>
        <strain>L20</strain>
    </source>
</reference>